<comment type="function">
    <text evidence="2">An ATPase (By similarity). Part of the ESX-5 specialized secretion system, which is responsible for the secretion of EsxN and a number of PE_PGRS and PPE proteins, including PPE41.</text>
</comment>
<comment type="subunit">
    <text evidence="1">Part of the ESX-5 / type VII secretion system (T7SS), which is composed of cytosolic and membrane components. The ESX-5 membrane complex is composed of EccB5, EccC5, EccD5 and EccE5.</text>
</comment>
<comment type="subcellular location">
    <subcellularLocation>
        <location evidence="1">Cell inner membrane</location>
        <topology evidence="3">Single-pass membrane protein</topology>
    </subcellularLocation>
</comment>
<comment type="similarity">
    <text evidence="4">Belongs to the EccB family.</text>
</comment>
<sequence>MAEESRGQRGSGYGLGLSTRTQVTGYQFLARRTAMALTRWRVRMEIEPGRRQTLAVVASVSAALVICLGALLWSFISPSGQLNESPIIADRDSGALYVRVGDRLYPALNLASARLITGRPDNPHLVRSSQIATMPRGPLVGIPGAPSSFSPKSPPASSWLVCDTVATSSSIGSLQGVTVTVIDGTPDLTGHRQILSGSDAVVLRYGGDAWVIREGRRSRIEPTNRAVLLPLGLTPEQVSQARPMSRALFDALPVGPELLVPEVPNAGGPATFPGAPGPIGTVIVTPQISGPQQYSLVLGDGVQTLPPLVAQILQNAGSAGNTKPLTVEPSTLAKMPVVNRLDLSAYPDNPLEVVDIREHPSTCWWWERTAGENRARVRVVSGPTIPVAATEMNKVVSLVKADTSGRQADQVYFGPDHANFVAVTGNNPGAQTSESLWWVTDAGARFGVEDSKEARDALGLTLTPSLAPWVALRLLPQGPTLSRADALVEHDTLPMDMTPAELVVPK</sequence>
<protein>
    <recommendedName>
        <fullName evidence="2">ESX-5 secretion system ATPase EccB5</fullName>
        <ecNumber evidence="4">3.6.-.-</ecNumber>
    </recommendedName>
    <alternativeName>
        <fullName evidence="2">ESX conserved component B5</fullName>
    </alternativeName>
    <alternativeName>
        <fullName evidence="2">Type VII secretion system protein EccB5</fullName>
        <shortName evidence="2">T7SS protein EccB5</shortName>
    </alternativeName>
</protein>
<reference key="1">
    <citation type="journal article" date="2002" name="J. Bacteriol.">
        <title>Whole-genome comparison of Mycobacterium tuberculosis clinical and laboratory strains.</title>
        <authorList>
            <person name="Fleischmann R.D."/>
            <person name="Alland D."/>
            <person name="Eisen J.A."/>
            <person name="Carpenter L."/>
            <person name="White O."/>
            <person name="Peterson J.D."/>
            <person name="DeBoy R.T."/>
            <person name="Dodson R.J."/>
            <person name="Gwinn M.L."/>
            <person name="Haft D.H."/>
            <person name="Hickey E.K."/>
            <person name="Kolonay J.F."/>
            <person name="Nelson W.C."/>
            <person name="Umayam L.A."/>
            <person name="Ermolaeva M.D."/>
            <person name="Salzberg S.L."/>
            <person name="Delcher A."/>
            <person name="Utterback T.R."/>
            <person name="Weidman J.F."/>
            <person name="Khouri H.M."/>
            <person name="Gill J."/>
            <person name="Mikula A."/>
            <person name="Bishai W."/>
            <person name="Jacobs W.R. Jr."/>
            <person name="Venter J.C."/>
            <person name="Fraser C.M."/>
        </authorList>
    </citation>
    <scope>NUCLEOTIDE SEQUENCE [LARGE SCALE GENOMIC DNA]</scope>
    <source>
        <strain>CDC 1551 / Oshkosh</strain>
    </source>
</reference>
<keyword id="KW-0067">ATP-binding</keyword>
<keyword id="KW-0997">Cell inner membrane</keyword>
<keyword id="KW-1003">Cell membrane</keyword>
<keyword id="KW-0378">Hydrolase</keyword>
<keyword id="KW-0472">Membrane</keyword>
<keyword id="KW-0547">Nucleotide-binding</keyword>
<keyword id="KW-1185">Reference proteome</keyword>
<keyword id="KW-0812">Transmembrane</keyword>
<keyword id="KW-1133">Transmembrane helix</keyword>
<keyword id="KW-0813">Transport</keyword>
<gene>
    <name evidence="2" type="primary">eccB5</name>
    <name type="ordered locus">MT1832</name>
</gene>
<dbReference type="EC" id="3.6.-.-" evidence="4"/>
<dbReference type="EMBL" id="AE000516">
    <property type="protein sequence ID" value="AAK46102.1"/>
    <property type="molecule type" value="Genomic_DNA"/>
</dbReference>
<dbReference type="PIR" id="H70928">
    <property type="entry name" value="H70928"/>
</dbReference>
<dbReference type="RefSeq" id="WP_003899021.1">
    <property type="nucleotide sequence ID" value="NZ_KK341227.1"/>
</dbReference>
<dbReference type="SMR" id="P9WNQ8"/>
<dbReference type="KEGG" id="mtc:MT1832"/>
<dbReference type="PATRIC" id="fig|83331.31.peg.1973"/>
<dbReference type="HOGENOM" id="CLU_036302_3_0_11"/>
<dbReference type="Proteomes" id="UP000001020">
    <property type="component" value="Chromosome"/>
</dbReference>
<dbReference type="GO" id="GO:0005576">
    <property type="term" value="C:extracellular region"/>
    <property type="evidence" value="ECO:0007669"/>
    <property type="project" value="TreeGrafter"/>
</dbReference>
<dbReference type="GO" id="GO:0005886">
    <property type="term" value="C:plasma membrane"/>
    <property type="evidence" value="ECO:0007669"/>
    <property type="project" value="UniProtKB-SubCell"/>
</dbReference>
<dbReference type="GO" id="GO:0005524">
    <property type="term" value="F:ATP binding"/>
    <property type="evidence" value="ECO:0007669"/>
    <property type="project" value="UniProtKB-KW"/>
</dbReference>
<dbReference type="GO" id="GO:0016787">
    <property type="term" value="F:hydrolase activity"/>
    <property type="evidence" value="ECO:0007669"/>
    <property type="project" value="UniProtKB-KW"/>
</dbReference>
<dbReference type="FunFam" id="3.30.2390.20:FF:000001">
    <property type="entry name" value="ESX-1 secretion system ATPase EccB1"/>
    <property type="match status" value="1"/>
</dbReference>
<dbReference type="Gene3D" id="3.30.2390.20">
    <property type="entry name" value="Type VII secretion system EccB, repeat 1 domain"/>
    <property type="match status" value="1"/>
</dbReference>
<dbReference type="Gene3D" id="2.40.50.910">
    <property type="entry name" value="Type VII secretion system EccB, repeat 3 domain"/>
    <property type="match status" value="1"/>
</dbReference>
<dbReference type="InterPro" id="IPR007795">
    <property type="entry name" value="T7SS_EccB"/>
</dbReference>
<dbReference type="InterPro" id="IPR044857">
    <property type="entry name" value="T7SS_EccB_R1"/>
</dbReference>
<dbReference type="InterPro" id="IPR042485">
    <property type="entry name" value="T7SS_EccB_R3"/>
</dbReference>
<dbReference type="NCBIfam" id="TIGR03919">
    <property type="entry name" value="T7SS_EccB"/>
    <property type="match status" value="1"/>
</dbReference>
<dbReference type="PANTHER" id="PTHR40765">
    <property type="entry name" value="ESX-2 SECRETION SYSTEM ATPASE ECCB2"/>
    <property type="match status" value="1"/>
</dbReference>
<dbReference type="PANTHER" id="PTHR40765:SF2">
    <property type="entry name" value="ESX-2 SECRETION SYSTEM ATPASE ECCB2"/>
    <property type="match status" value="1"/>
</dbReference>
<dbReference type="Pfam" id="PF05108">
    <property type="entry name" value="T7SS_ESX1_EccB"/>
    <property type="match status" value="1"/>
</dbReference>
<feature type="chain" id="PRO_0000427084" description="ESX-5 secretion system ATPase EccB5">
    <location>
        <begin position="1"/>
        <end position="506"/>
    </location>
</feature>
<feature type="transmembrane region" description="Helical" evidence="3">
    <location>
        <begin position="56"/>
        <end position="76"/>
    </location>
</feature>
<proteinExistence type="inferred from homology"/>
<name>ECCB5_MYCTO</name>
<accession>P9WNQ8</accession>
<accession>L0TAD6</accession>
<accession>O53933</accession>
<accession>Q7D7Z1</accession>
<evidence type="ECO:0000250" key="1">
    <source>
        <dbReference type="UniProtKB" id="B2HST3"/>
    </source>
</evidence>
<evidence type="ECO:0000250" key="2">
    <source>
        <dbReference type="UniProtKB" id="P9WNQ9"/>
    </source>
</evidence>
<evidence type="ECO:0000255" key="3"/>
<evidence type="ECO:0000305" key="4"/>
<organism>
    <name type="scientific">Mycobacterium tuberculosis (strain CDC 1551 / Oshkosh)</name>
    <dbReference type="NCBI Taxonomy" id="83331"/>
    <lineage>
        <taxon>Bacteria</taxon>
        <taxon>Bacillati</taxon>
        <taxon>Actinomycetota</taxon>
        <taxon>Actinomycetes</taxon>
        <taxon>Mycobacteriales</taxon>
        <taxon>Mycobacteriaceae</taxon>
        <taxon>Mycobacterium</taxon>
        <taxon>Mycobacterium tuberculosis complex</taxon>
    </lineage>
</organism>